<proteinExistence type="inferred from homology"/>
<name>RS15_ANADE</name>
<dbReference type="EMBL" id="CP000251">
    <property type="protein sequence ID" value="ABC80881.1"/>
    <property type="molecule type" value="Genomic_DNA"/>
</dbReference>
<dbReference type="RefSeq" id="WP_011420164.1">
    <property type="nucleotide sequence ID" value="NC_007760.1"/>
</dbReference>
<dbReference type="SMR" id="Q2IQ02"/>
<dbReference type="STRING" id="290397.Adeh_1106"/>
<dbReference type="KEGG" id="ade:Adeh_1106"/>
<dbReference type="eggNOG" id="COG0184">
    <property type="taxonomic scope" value="Bacteria"/>
</dbReference>
<dbReference type="HOGENOM" id="CLU_148518_0_0_7"/>
<dbReference type="OrthoDB" id="9799262at2"/>
<dbReference type="Proteomes" id="UP000001935">
    <property type="component" value="Chromosome"/>
</dbReference>
<dbReference type="GO" id="GO:0022627">
    <property type="term" value="C:cytosolic small ribosomal subunit"/>
    <property type="evidence" value="ECO:0007669"/>
    <property type="project" value="TreeGrafter"/>
</dbReference>
<dbReference type="GO" id="GO:0019843">
    <property type="term" value="F:rRNA binding"/>
    <property type="evidence" value="ECO:0007669"/>
    <property type="project" value="UniProtKB-UniRule"/>
</dbReference>
<dbReference type="GO" id="GO:0003735">
    <property type="term" value="F:structural constituent of ribosome"/>
    <property type="evidence" value="ECO:0007669"/>
    <property type="project" value="InterPro"/>
</dbReference>
<dbReference type="GO" id="GO:0006412">
    <property type="term" value="P:translation"/>
    <property type="evidence" value="ECO:0007669"/>
    <property type="project" value="UniProtKB-UniRule"/>
</dbReference>
<dbReference type="CDD" id="cd00353">
    <property type="entry name" value="Ribosomal_S15p_S13e"/>
    <property type="match status" value="1"/>
</dbReference>
<dbReference type="FunFam" id="1.10.287.10:FF:000002">
    <property type="entry name" value="30S ribosomal protein S15"/>
    <property type="match status" value="1"/>
</dbReference>
<dbReference type="Gene3D" id="6.10.250.3130">
    <property type="match status" value="1"/>
</dbReference>
<dbReference type="Gene3D" id="1.10.287.10">
    <property type="entry name" value="S15/NS1, RNA-binding"/>
    <property type="match status" value="1"/>
</dbReference>
<dbReference type="HAMAP" id="MF_01343_B">
    <property type="entry name" value="Ribosomal_uS15_B"/>
    <property type="match status" value="1"/>
</dbReference>
<dbReference type="InterPro" id="IPR000589">
    <property type="entry name" value="Ribosomal_uS15"/>
</dbReference>
<dbReference type="InterPro" id="IPR005290">
    <property type="entry name" value="Ribosomal_uS15_bac-type"/>
</dbReference>
<dbReference type="InterPro" id="IPR009068">
    <property type="entry name" value="uS15_NS1_RNA-bd_sf"/>
</dbReference>
<dbReference type="NCBIfam" id="TIGR00952">
    <property type="entry name" value="S15_bact"/>
    <property type="match status" value="1"/>
</dbReference>
<dbReference type="PANTHER" id="PTHR23321">
    <property type="entry name" value="RIBOSOMAL PROTEIN S15, BACTERIAL AND ORGANELLAR"/>
    <property type="match status" value="1"/>
</dbReference>
<dbReference type="PANTHER" id="PTHR23321:SF26">
    <property type="entry name" value="SMALL RIBOSOMAL SUBUNIT PROTEIN US15M"/>
    <property type="match status" value="1"/>
</dbReference>
<dbReference type="Pfam" id="PF00312">
    <property type="entry name" value="Ribosomal_S15"/>
    <property type="match status" value="1"/>
</dbReference>
<dbReference type="SMART" id="SM01387">
    <property type="entry name" value="Ribosomal_S15"/>
    <property type="match status" value="1"/>
</dbReference>
<dbReference type="SUPFAM" id="SSF47060">
    <property type="entry name" value="S15/NS1 RNA-binding domain"/>
    <property type="match status" value="1"/>
</dbReference>
<dbReference type="PROSITE" id="PS00362">
    <property type="entry name" value="RIBOSOMAL_S15"/>
    <property type="match status" value="1"/>
</dbReference>
<keyword id="KW-1185">Reference proteome</keyword>
<keyword id="KW-0687">Ribonucleoprotein</keyword>
<keyword id="KW-0689">Ribosomal protein</keyword>
<keyword id="KW-0694">RNA-binding</keyword>
<keyword id="KW-0699">rRNA-binding</keyword>
<comment type="function">
    <text evidence="1">One of the primary rRNA binding proteins, it binds directly to 16S rRNA where it helps nucleate assembly of the platform of the 30S subunit by binding and bridging several RNA helices of the 16S rRNA.</text>
</comment>
<comment type="function">
    <text evidence="1">Forms an intersubunit bridge (bridge B4) with the 23S rRNA of the 50S subunit in the ribosome.</text>
</comment>
<comment type="subunit">
    <text evidence="1">Part of the 30S ribosomal subunit. Forms a bridge to the 50S subunit in the 70S ribosome, contacting the 23S rRNA.</text>
</comment>
<comment type="similarity">
    <text evidence="1">Belongs to the universal ribosomal protein uS15 family.</text>
</comment>
<protein>
    <recommendedName>
        <fullName evidence="1">Small ribosomal subunit protein uS15</fullName>
    </recommendedName>
    <alternativeName>
        <fullName evidence="2">30S ribosomal protein S15</fullName>
    </alternativeName>
</protein>
<gene>
    <name evidence="1" type="primary">rpsO</name>
    <name type="ordered locus">Adeh_1106</name>
</gene>
<feature type="chain" id="PRO_0000255476" description="Small ribosomal subunit protein uS15">
    <location>
        <begin position="1"/>
        <end position="89"/>
    </location>
</feature>
<accession>Q2IQ02</accession>
<sequence>MALVQEKKQELVQKYKRHEKDTGSPEVQVALLSERIAYLTEHFKTHKKDHHSRRGLLKLVGQRRRLLDYLRTIDQGRYKTLIDQLGIRK</sequence>
<evidence type="ECO:0000255" key="1">
    <source>
        <dbReference type="HAMAP-Rule" id="MF_01343"/>
    </source>
</evidence>
<evidence type="ECO:0000305" key="2"/>
<organism>
    <name type="scientific">Anaeromyxobacter dehalogenans (strain 2CP-C)</name>
    <dbReference type="NCBI Taxonomy" id="290397"/>
    <lineage>
        <taxon>Bacteria</taxon>
        <taxon>Pseudomonadati</taxon>
        <taxon>Myxococcota</taxon>
        <taxon>Myxococcia</taxon>
        <taxon>Myxococcales</taxon>
        <taxon>Cystobacterineae</taxon>
        <taxon>Anaeromyxobacteraceae</taxon>
        <taxon>Anaeromyxobacter</taxon>
    </lineage>
</organism>
<reference key="1">
    <citation type="submission" date="2006-01" db="EMBL/GenBank/DDBJ databases">
        <title>Complete sequence of Anaeromyxobacter dehalogenans 2CP-C.</title>
        <authorList>
            <person name="Copeland A."/>
            <person name="Lucas S."/>
            <person name="Lapidus A."/>
            <person name="Barry K."/>
            <person name="Detter J.C."/>
            <person name="Glavina T."/>
            <person name="Hammon N."/>
            <person name="Israni S."/>
            <person name="Pitluck S."/>
            <person name="Brettin T."/>
            <person name="Bruce D."/>
            <person name="Han C."/>
            <person name="Tapia R."/>
            <person name="Gilna P."/>
            <person name="Kiss H."/>
            <person name="Schmutz J."/>
            <person name="Larimer F."/>
            <person name="Land M."/>
            <person name="Kyrpides N."/>
            <person name="Anderson I."/>
            <person name="Sanford R.A."/>
            <person name="Ritalahti K.M."/>
            <person name="Thomas H.S."/>
            <person name="Kirby J.R."/>
            <person name="Zhulin I.B."/>
            <person name="Loeffler F.E."/>
            <person name="Richardson P."/>
        </authorList>
    </citation>
    <scope>NUCLEOTIDE SEQUENCE [LARGE SCALE GENOMIC DNA]</scope>
    <source>
        <strain>2CP-C</strain>
    </source>
</reference>